<organism>
    <name type="scientific">Salmonella paratyphi C (strain RKS4594)</name>
    <dbReference type="NCBI Taxonomy" id="476213"/>
    <lineage>
        <taxon>Bacteria</taxon>
        <taxon>Pseudomonadati</taxon>
        <taxon>Pseudomonadota</taxon>
        <taxon>Gammaproteobacteria</taxon>
        <taxon>Enterobacterales</taxon>
        <taxon>Enterobacteriaceae</taxon>
        <taxon>Salmonella</taxon>
    </lineage>
</organism>
<sequence>MYYPFVRKALFQLDPERAHEFTFQQLRRITGTPLEALVRQKVPTKPVTCMGLTFKNPLGLAAGLDKDGECIDALGAMGFGSLEIGTVTPRPQPGNDKPRLFRLVDAEGLINRMGFNNLGVDNLVENVKKAHFDGILGINIGKNKDTPVENGKDDYLICMEKVYAYAGYIAINISSPNTPGLRTLQYGDALDDLLTAIKNKQNDLQAIHHKYVPVAVKIAPDLCEEELIQVADSLLRHNIDGVIATNTTLDRSLVQGMKNCQQTGGLSGRPLQLKSTEIIRRLSQELKGQLPIIGVGGIDSVIAAREKIAAGATLVQIYSGFIFKGPPLIKEIVTHI</sequence>
<feature type="chain" id="PRO_1000195089" description="Dihydroorotate dehydrogenase (quinone)">
    <location>
        <begin position="1"/>
        <end position="336"/>
    </location>
</feature>
<feature type="active site" description="Nucleophile" evidence="1">
    <location>
        <position position="175"/>
    </location>
</feature>
<feature type="binding site" evidence="1">
    <location>
        <begin position="62"/>
        <end position="66"/>
    </location>
    <ligand>
        <name>FMN</name>
        <dbReference type="ChEBI" id="CHEBI:58210"/>
    </ligand>
</feature>
<feature type="binding site" evidence="1">
    <location>
        <position position="66"/>
    </location>
    <ligand>
        <name>substrate</name>
    </ligand>
</feature>
<feature type="binding site" evidence="1">
    <location>
        <position position="86"/>
    </location>
    <ligand>
        <name>FMN</name>
        <dbReference type="ChEBI" id="CHEBI:58210"/>
    </ligand>
</feature>
<feature type="binding site" evidence="1">
    <location>
        <begin position="111"/>
        <end position="115"/>
    </location>
    <ligand>
        <name>substrate</name>
    </ligand>
</feature>
<feature type="binding site" evidence="1">
    <location>
        <position position="139"/>
    </location>
    <ligand>
        <name>FMN</name>
        <dbReference type="ChEBI" id="CHEBI:58210"/>
    </ligand>
</feature>
<feature type="binding site" evidence="1">
    <location>
        <position position="172"/>
    </location>
    <ligand>
        <name>FMN</name>
        <dbReference type="ChEBI" id="CHEBI:58210"/>
    </ligand>
</feature>
<feature type="binding site" evidence="1">
    <location>
        <position position="172"/>
    </location>
    <ligand>
        <name>substrate</name>
    </ligand>
</feature>
<feature type="binding site" evidence="1">
    <location>
        <position position="177"/>
    </location>
    <ligand>
        <name>substrate</name>
    </ligand>
</feature>
<feature type="binding site" evidence="1">
    <location>
        <position position="217"/>
    </location>
    <ligand>
        <name>FMN</name>
        <dbReference type="ChEBI" id="CHEBI:58210"/>
    </ligand>
</feature>
<feature type="binding site" evidence="1">
    <location>
        <position position="245"/>
    </location>
    <ligand>
        <name>FMN</name>
        <dbReference type="ChEBI" id="CHEBI:58210"/>
    </ligand>
</feature>
<feature type="binding site" evidence="1">
    <location>
        <begin position="246"/>
        <end position="247"/>
    </location>
    <ligand>
        <name>substrate</name>
    </ligand>
</feature>
<feature type="binding site" evidence="1">
    <location>
        <position position="268"/>
    </location>
    <ligand>
        <name>FMN</name>
        <dbReference type="ChEBI" id="CHEBI:58210"/>
    </ligand>
</feature>
<feature type="binding site" evidence="1">
    <location>
        <position position="297"/>
    </location>
    <ligand>
        <name>FMN</name>
        <dbReference type="ChEBI" id="CHEBI:58210"/>
    </ligand>
</feature>
<feature type="binding site" evidence="1">
    <location>
        <begin position="318"/>
        <end position="319"/>
    </location>
    <ligand>
        <name>FMN</name>
        <dbReference type="ChEBI" id="CHEBI:58210"/>
    </ligand>
</feature>
<comment type="function">
    <text evidence="1">Catalyzes the conversion of dihydroorotate to orotate with quinone as electron acceptor.</text>
</comment>
<comment type="catalytic activity">
    <reaction evidence="1">
        <text>(S)-dihydroorotate + a quinone = orotate + a quinol</text>
        <dbReference type="Rhea" id="RHEA:30187"/>
        <dbReference type="ChEBI" id="CHEBI:24646"/>
        <dbReference type="ChEBI" id="CHEBI:30839"/>
        <dbReference type="ChEBI" id="CHEBI:30864"/>
        <dbReference type="ChEBI" id="CHEBI:132124"/>
        <dbReference type="EC" id="1.3.5.2"/>
    </reaction>
</comment>
<comment type="cofactor">
    <cofactor evidence="1">
        <name>FMN</name>
        <dbReference type="ChEBI" id="CHEBI:58210"/>
    </cofactor>
    <text evidence="1">Binds 1 FMN per subunit.</text>
</comment>
<comment type="pathway">
    <text evidence="1">Pyrimidine metabolism; UMP biosynthesis via de novo pathway; orotate from (S)-dihydroorotate (quinone route): step 1/1.</text>
</comment>
<comment type="subunit">
    <text evidence="1">Monomer.</text>
</comment>
<comment type="subcellular location">
    <subcellularLocation>
        <location evidence="1">Cell membrane</location>
        <topology evidence="1">Peripheral membrane protein</topology>
    </subcellularLocation>
</comment>
<comment type="similarity">
    <text evidence="1">Belongs to the dihydroorotate dehydrogenase family. Type 2 subfamily.</text>
</comment>
<gene>
    <name evidence="1" type="primary">pyrD</name>
    <name type="ordered locus">SPC_2691</name>
</gene>
<protein>
    <recommendedName>
        <fullName evidence="1">Dihydroorotate dehydrogenase (quinone)</fullName>
        <ecNumber evidence="1">1.3.5.2</ecNumber>
    </recommendedName>
    <alternativeName>
        <fullName evidence="1">DHOdehase</fullName>
        <shortName evidence="1">DHOD</shortName>
        <shortName evidence="1">DHODase</shortName>
    </alternativeName>
    <alternativeName>
        <fullName evidence="1">Dihydroorotate oxidase</fullName>
    </alternativeName>
</protein>
<evidence type="ECO:0000255" key="1">
    <source>
        <dbReference type="HAMAP-Rule" id="MF_00225"/>
    </source>
</evidence>
<accession>C0PVS5</accession>
<keyword id="KW-1003">Cell membrane</keyword>
<keyword id="KW-0285">Flavoprotein</keyword>
<keyword id="KW-0288">FMN</keyword>
<keyword id="KW-0472">Membrane</keyword>
<keyword id="KW-0560">Oxidoreductase</keyword>
<keyword id="KW-0665">Pyrimidine biosynthesis</keyword>
<name>PYRD_SALPC</name>
<reference key="1">
    <citation type="journal article" date="2009" name="PLoS ONE">
        <title>Salmonella paratyphi C: genetic divergence from Salmonella choleraesuis and pathogenic convergence with Salmonella typhi.</title>
        <authorList>
            <person name="Liu W.-Q."/>
            <person name="Feng Y."/>
            <person name="Wang Y."/>
            <person name="Zou Q.-H."/>
            <person name="Chen F."/>
            <person name="Guo J.-T."/>
            <person name="Peng Y.-H."/>
            <person name="Jin Y."/>
            <person name="Li Y.-G."/>
            <person name="Hu S.-N."/>
            <person name="Johnston R.N."/>
            <person name="Liu G.-R."/>
            <person name="Liu S.-L."/>
        </authorList>
    </citation>
    <scope>NUCLEOTIDE SEQUENCE [LARGE SCALE GENOMIC DNA]</scope>
    <source>
        <strain>RKS4594</strain>
    </source>
</reference>
<proteinExistence type="inferred from homology"/>
<dbReference type="EC" id="1.3.5.2" evidence="1"/>
<dbReference type="EMBL" id="CP000857">
    <property type="protein sequence ID" value="ACN46792.1"/>
    <property type="molecule type" value="Genomic_DNA"/>
</dbReference>
<dbReference type="RefSeq" id="WP_000291723.1">
    <property type="nucleotide sequence ID" value="NC_012125.1"/>
</dbReference>
<dbReference type="SMR" id="C0PVS5"/>
<dbReference type="KEGG" id="sei:SPC_2691"/>
<dbReference type="HOGENOM" id="CLU_013640_2_0_6"/>
<dbReference type="UniPathway" id="UPA00070">
    <property type="reaction ID" value="UER00946"/>
</dbReference>
<dbReference type="Proteomes" id="UP000001599">
    <property type="component" value="Chromosome"/>
</dbReference>
<dbReference type="GO" id="GO:0005737">
    <property type="term" value="C:cytoplasm"/>
    <property type="evidence" value="ECO:0007669"/>
    <property type="project" value="InterPro"/>
</dbReference>
<dbReference type="GO" id="GO:0005886">
    <property type="term" value="C:plasma membrane"/>
    <property type="evidence" value="ECO:0007669"/>
    <property type="project" value="UniProtKB-SubCell"/>
</dbReference>
<dbReference type="GO" id="GO:0106430">
    <property type="term" value="F:dihydroorotate dehydrogenase (quinone) activity"/>
    <property type="evidence" value="ECO:0007669"/>
    <property type="project" value="UniProtKB-EC"/>
</dbReference>
<dbReference type="GO" id="GO:0006207">
    <property type="term" value="P:'de novo' pyrimidine nucleobase biosynthetic process"/>
    <property type="evidence" value="ECO:0007669"/>
    <property type="project" value="InterPro"/>
</dbReference>
<dbReference type="GO" id="GO:0044205">
    <property type="term" value="P:'de novo' UMP biosynthetic process"/>
    <property type="evidence" value="ECO:0007669"/>
    <property type="project" value="UniProtKB-UniRule"/>
</dbReference>
<dbReference type="CDD" id="cd04738">
    <property type="entry name" value="DHOD_2_like"/>
    <property type="match status" value="1"/>
</dbReference>
<dbReference type="FunFam" id="3.20.20.70:FF:000028">
    <property type="entry name" value="Dihydroorotate dehydrogenase (quinone)"/>
    <property type="match status" value="1"/>
</dbReference>
<dbReference type="Gene3D" id="3.20.20.70">
    <property type="entry name" value="Aldolase class I"/>
    <property type="match status" value="1"/>
</dbReference>
<dbReference type="HAMAP" id="MF_00225">
    <property type="entry name" value="DHO_dh_type2"/>
    <property type="match status" value="1"/>
</dbReference>
<dbReference type="InterPro" id="IPR013785">
    <property type="entry name" value="Aldolase_TIM"/>
</dbReference>
<dbReference type="InterPro" id="IPR050074">
    <property type="entry name" value="DHO_dehydrogenase"/>
</dbReference>
<dbReference type="InterPro" id="IPR012135">
    <property type="entry name" value="Dihydroorotate_DH_1_2"/>
</dbReference>
<dbReference type="InterPro" id="IPR005719">
    <property type="entry name" value="Dihydroorotate_DH_2"/>
</dbReference>
<dbReference type="InterPro" id="IPR005720">
    <property type="entry name" value="Dihydroorotate_DH_cat"/>
</dbReference>
<dbReference type="InterPro" id="IPR001295">
    <property type="entry name" value="Dihydroorotate_DH_CS"/>
</dbReference>
<dbReference type="NCBIfam" id="NF003644">
    <property type="entry name" value="PRK05286.1-1"/>
    <property type="match status" value="1"/>
</dbReference>
<dbReference type="NCBIfam" id="NF003645">
    <property type="entry name" value="PRK05286.1-2"/>
    <property type="match status" value="1"/>
</dbReference>
<dbReference type="NCBIfam" id="NF003646">
    <property type="entry name" value="PRK05286.1-4"/>
    <property type="match status" value="1"/>
</dbReference>
<dbReference type="NCBIfam" id="NF003652">
    <property type="entry name" value="PRK05286.2-5"/>
    <property type="match status" value="1"/>
</dbReference>
<dbReference type="NCBIfam" id="TIGR01036">
    <property type="entry name" value="pyrD_sub2"/>
    <property type="match status" value="1"/>
</dbReference>
<dbReference type="PANTHER" id="PTHR48109:SF4">
    <property type="entry name" value="DIHYDROOROTATE DEHYDROGENASE (QUINONE), MITOCHONDRIAL"/>
    <property type="match status" value="1"/>
</dbReference>
<dbReference type="PANTHER" id="PTHR48109">
    <property type="entry name" value="DIHYDROOROTATE DEHYDROGENASE (QUINONE), MITOCHONDRIAL-RELATED"/>
    <property type="match status" value="1"/>
</dbReference>
<dbReference type="Pfam" id="PF01180">
    <property type="entry name" value="DHO_dh"/>
    <property type="match status" value="1"/>
</dbReference>
<dbReference type="PIRSF" id="PIRSF000164">
    <property type="entry name" value="DHO_oxidase"/>
    <property type="match status" value="1"/>
</dbReference>
<dbReference type="SUPFAM" id="SSF51395">
    <property type="entry name" value="FMN-linked oxidoreductases"/>
    <property type="match status" value="1"/>
</dbReference>
<dbReference type="PROSITE" id="PS00911">
    <property type="entry name" value="DHODEHASE_1"/>
    <property type="match status" value="1"/>
</dbReference>
<dbReference type="PROSITE" id="PS00912">
    <property type="entry name" value="DHODEHASE_2"/>
    <property type="match status" value="1"/>
</dbReference>